<sequence length="728" mass="84358">MSSRIDRDVINALIAGHFADPFSVLGMHQTQAGLEVRALLPDATDVWVIEPKTGRKVGKLECLDARGFFCGVLPRRKNFFRYQLAVVWHGQQNLIDDPYRFGPLIQEMDAWLLSEGTHLRPYETLGAHADTMDGVTGTRFSVWAPNARRVSVVGQFNYWDGRRHPMRLRKESGIWELFIPGAHNGQLYKFELLDANGNLRIKADPYAFEAQMRPETASMICGLPEKVTQSEERQKANQFDAPISIYEVHLGSWRRHTDNNFWLSYRELADQLVPYAKWMGFTHLELLPVNEHPFDGSWGYQPTGLYAPTRRFGTRDDFRYFINAAHAAGLNVILDWVPGHFPSDDFSLAEFDGTHLYEHSDPREGYHQDWNTLIYNYGRREVSNYLVGNALYWMERFGIDALRVDAVASMIYRDYSRKEGEWIPNEFGGRENLEAIEFLRNTNRIIGEQVPGAVSMAEESTDFSGVTRPPETGGLGFWFKWNLGWMHDTLDYMKLDPVYRQYHHDKLTFGMLYNHTENFVLPLSHDEVVHGKKSILDRMPGDAWQKFANLRAYYGWMWAFPGKKLLFMGNEFAQGREWNHDASLDWHLLEGGDNWHHGVQRLVRDLNHTYRHHKALHELDFDAYGFEWLVVDDNERSVLIFVRRDKAGNEIIVASNFTPVPRYDYRFGVNQPGRWREILNTDSMHYHGSNTGNGGVVHSDEIESHGRQHSLRLTLPPLATIWLMREGE</sequence>
<feature type="chain" id="PRO_1000083069" description="1,4-alpha-glucan branching enzyme GlgB">
    <location>
        <begin position="1"/>
        <end position="728"/>
    </location>
</feature>
<feature type="active site" description="Nucleophile" evidence="1">
    <location>
        <position position="405"/>
    </location>
</feature>
<feature type="active site" description="Proton donor" evidence="1">
    <location>
        <position position="458"/>
    </location>
</feature>
<keyword id="KW-0119">Carbohydrate metabolism</keyword>
<keyword id="KW-0320">Glycogen biosynthesis</keyword>
<keyword id="KW-0321">Glycogen metabolism</keyword>
<keyword id="KW-0328">Glycosyltransferase</keyword>
<keyword id="KW-1185">Reference proteome</keyword>
<keyword id="KW-0808">Transferase</keyword>
<name>GLGB_SALAR</name>
<gene>
    <name evidence="1" type="primary">glgB</name>
    <name type="ordered locus">SARI_04090</name>
</gene>
<dbReference type="EC" id="2.4.1.18" evidence="1"/>
<dbReference type="EMBL" id="CP000880">
    <property type="protein sequence ID" value="ABX23879.1"/>
    <property type="molecule type" value="Genomic_DNA"/>
</dbReference>
<dbReference type="SMR" id="A9MMA0"/>
<dbReference type="STRING" id="41514.SARI_04090"/>
<dbReference type="CAZy" id="CBM48">
    <property type="family name" value="Carbohydrate-Binding Module Family 48"/>
</dbReference>
<dbReference type="CAZy" id="GH13">
    <property type="family name" value="Glycoside Hydrolase Family 13"/>
</dbReference>
<dbReference type="KEGG" id="ses:SARI_04090"/>
<dbReference type="HOGENOM" id="CLU_004245_3_2_6"/>
<dbReference type="UniPathway" id="UPA00164"/>
<dbReference type="Proteomes" id="UP000002084">
    <property type="component" value="Chromosome"/>
</dbReference>
<dbReference type="GO" id="GO:0005829">
    <property type="term" value="C:cytosol"/>
    <property type="evidence" value="ECO:0007669"/>
    <property type="project" value="TreeGrafter"/>
</dbReference>
<dbReference type="GO" id="GO:0003844">
    <property type="term" value="F:1,4-alpha-glucan branching enzyme activity"/>
    <property type="evidence" value="ECO:0007669"/>
    <property type="project" value="UniProtKB-UniRule"/>
</dbReference>
<dbReference type="GO" id="GO:0043169">
    <property type="term" value="F:cation binding"/>
    <property type="evidence" value="ECO:0007669"/>
    <property type="project" value="InterPro"/>
</dbReference>
<dbReference type="GO" id="GO:0004553">
    <property type="term" value="F:hydrolase activity, hydrolyzing O-glycosyl compounds"/>
    <property type="evidence" value="ECO:0007669"/>
    <property type="project" value="InterPro"/>
</dbReference>
<dbReference type="GO" id="GO:0005978">
    <property type="term" value="P:glycogen biosynthetic process"/>
    <property type="evidence" value="ECO:0007669"/>
    <property type="project" value="UniProtKB-UniRule"/>
</dbReference>
<dbReference type="CDD" id="cd11322">
    <property type="entry name" value="AmyAc_Glg_BE"/>
    <property type="match status" value="1"/>
</dbReference>
<dbReference type="CDD" id="cd02855">
    <property type="entry name" value="E_set_GBE_prok_N"/>
    <property type="match status" value="1"/>
</dbReference>
<dbReference type="FunFam" id="2.60.40.10:FF:000169">
    <property type="entry name" value="1,4-alpha-glucan branching enzyme GlgB"/>
    <property type="match status" value="1"/>
</dbReference>
<dbReference type="FunFam" id="2.60.40.10:FF:000331">
    <property type="entry name" value="1,4-alpha-glucan branching enzyme GlgB"/>
    <property type="match status" value="1"/>
</dbReference>
<dbReference type="FunFam" id="2.60.40.1180:FF:000002">
    <property type="entry name" value="1,4-alpha-glucan branching enzyme GlgB"/>
    <property type="match status" value="1"/>
</dbReference>
<dbReference type="FunFam" id="3.20.20.80:FF:000003">
    <property type="entry name" value="1,4-alpha-glucan branching enzyme GlgB"/>
    <property type="match status" value="1"/>
</dbReference>
<dbReference type="Gene3D" id="3.20.20.80">
    <property type="entry name" value="Glycosidases"/>
    <property type="match status" value="1"/>
</dbReference>
<dbReference type="Gene3D" id="2.60.40.1180">
    <property type="entry name" value="Golgi alpha-mannosidase II"/>
    <property type="match status" value="1"/>
</dbReference>
<dbReference type="Gene3D" id="2.60.40.10">
    <property type="entry name" value="Immunoglobulins"/>
    <property type="match status" value="2"/>
</dbReference>
<dbReference type="HAMAP" id="MF_00685">
    <property type="entry name" value="GlgB"/>
    <property type="match status" value="1"/>
</dbReference>
<dbReference type="InterPro" id="IPR006048">
    <property type="entry name" value="A-amylase/branching_C"/>
</dbReference>
<dbReference type="InterPro" id="IPR037439">
    <property type="entry name" value="Branching_enzy"/>
</dbReference>
<dbReference type="InterPro" id="IPR006407">
    <property type="entry name" value="GlgB"/>
</dbReference>
<dbReference type="InterPro" id="IPR054169">
    <property type="entry name" value="GlgB_N"/>
</dbReference>
<dbReference type="InterPro" id="IPR044143">
    <property type="entry name" value="GlgB_N_E_set_prok"/>
</dbReference>
<dbReference type="InterPro" id="IPR006047">
    <property type="entry name" value="Glyco_hydro_13_cat_dom"/>
</dbReference>
<dbReference type="InterPro" id="IPR004193">
    <property type="entry name" value="Glyco_hydro_13_N"/>
</dbReference>
<dbReference type="InterPro" id="IPR013780">
    <property type="entry name" value="Glyco_hydro_b"/>
</dbReference>
<dbReference type="InterPro" id="IPR017853">
    <property type="entry name" value="Glycoside_hydrolase_SF"/>
</dbReference>
<dbReference type="InterPro" id="IPR013783">
    <property type="entry name" value="Ig-like_fold"/>
</dbReference>
<dbReference type="InterPro" id="IPR014756">
    <property type="entry name" value="Ig_E-set"/>
</dbReference>
<dbReference type="NCBIfam" id="TIGR01515">
    <property type="entry name" value="branching_enzym"/>
    <property type="match status" value="1"/>
</dbReference>
<dbReference type="NCBIfam" id="NF003811">
    <property type="entry name" value="PRK05402.1"/>
    <property type="match status" value="1"/>
</dbReference>
<dbReference type="NCBIfam" id="NF008967">
    <property type="entry name" value="PRK12313.1"/>
    <property type="match status" value="1"/>
</dbReference>
<dbReference type="PANTHER" id="PTHR43651">
    <property type="entry name" value="1,4-ALPHA-GLUCAN-BRANCHING ENZYME"/>
    <property type="match status" value="1"/>
</dbReference>
<dbReference type="PANTHER" id="PTHR43651:SF3">
    <property type="entry name" value="1,4-ALPHA-GLUCAN-BRANCHING ENZYME"/>
    <property type="match status" value="1"/>
</dbReference>
<dbReference type="Pfam" id="PF00128">
    <property type="entry name" value="Alpha-amylase"/>
    <property type="match status" value="1"/>
</dbReference>
<dbReference type="Pfam" id="PF02806">
    <property type="entry name" value="Alpha-amylase_C"/>
    <property type="match status" value="1"/>
</dbReference>
<dbReference type="Pfam" id="PF02922">
    <property type="entry name" value="CBM_48"/>
    <property type="match status" value="1"/>
</dbReference>
<dbReference type="Pfam" id="PF22019">
    <property type="entry name" value="GlgB_N"/>
    <property type="match status" value="1"/>
</dbReference>
<dbReference type="PIRSF" id="PIRSF000463">
    <property type="entry name" value="GlgB"/>
    <property type="match status" value="1"/>
</dbReference>
<dbReference type="SMART" id="SM00642">
    <property type="entry name" value="Aamy"/>
    <property type="match status" value="1"/>
</dbReference>
<dbReference type="SUPFAM" id="SSF51445">
    <property type="entry name" value="(Trans)glycosidases"/>
    <property type="match status" value="1"/>
</dbReference>
<dbReference type="SUPFAM" id="SSF81296">
    <property type="entry name" value="E set domains"/>
    <property type="match status" value="2"/>
</dbReference>
<dbReference type="SUPFAM" id="SSF51011">
    <property type="entry name" value="Glycosyl hydrolase domain"/>
    <property type="match status" value="1"/>
</dbReference>
<reference key="1">
    <citation type="submission" date="2007-11" db="EMBL/GenBank/DDBJ databases">
        <authorList>
            <consortium name="The Salmonella enterica serovar Arizonae Genome Sequencing Project"/>
            <person name="McClelland M."/>
            <person name="Sanderson E.K."/>
            <person name="Porwollik S."/>
            <person name="Spieth J."/>
            <person name="Clifton W.S."/>
            <person name="Fulton R."/>
            <person name="Chunyan W."/>
            <person name="Wollam A."/>
            <person name="Shah N."/>
            <person name="Pepin K."/>
            <person name="Bhonagiri V."/>
            <person name="Nash W."/>
            <person name="Johnson M."/>
            <person name="Thiruvilangam P."/>
            <person name="Wilson R."/>
        </authorList>
    </citation>
    <scope>NUCLEOTIDE SEQUENCE [LARGE SCALE GENOMIC DNA]</scope>
    <source>
        <strain>ATCC BAA-731 / CDC346-86 / RSK2980</strain>
    </source>
</reference>
<proteinExistence type="inferred from homology"/>
<protein>
    <recommendedName>
        <fullName evidence="1">1,4-alpha-glucan branching enzyme GlgB</fullName>
        <ecNumber evidence="1">2.4.1.18</ecNumber>
    </recommendedName>
    <alternativeName>
        <fullName evidence="1">1,4-alpha-D-glucan:1,4-alpha-D-glucan 6-glucosyl-transferase</fullName>
    </alternativeName>
    <alternativeName>
        <fullName evidence="1">Alpha-(1-&gt;4)-glucan branching enzyme</fullName>
    </alternativeName>
    <alternativeName>
        <fullName evidence="1">Glycogen branching enzyme</fullName>
        <shortName evidence="1">BE</shortName>
    </alternativeName>
</protein>
<accession>A9MMA0</accession>
<comment type="function">
    <text evidence="1">Catalyzes the formation of the alpha-1,6-glucosidic linkages in glycogen by scission of a 1,4-alpha-linked oligosaccharide from growing alpha-1,4-glucan chains and the subsequent attachment of the oligosaccharide to the alpha-1,6 position.</text>
</comment>
<comment type="catalytic activity">
    <reaction evidence="1">
        <text>Transfers a segment of a (1-&gt;4)-alpha-D-glucan chain to a primary hydroxy group in a similar glucan chain.</text>
        <dbReference type="EC" id="2.4.1.18"/>
    </reaction>
</comment>
<comment type="pathway">
    <text evidence="1">Glycan biosynthesis; glycogen biosynthesis.</text>
</comment>
<comment type="subunit">
    <text evidence="1">Monomer.</text>
</comment>
<comment type="similarity">
    <text evidence="1">Belongs to the glycosyl hydrolase 13 family. GlgB subfamily.</text>
</comment>
<evidence type="ECO:0000255" key="1">
    <source>
        <dbReference type="HAMAP-Rule" id="MF_00685"/>
    </source>
</evidence>
<organism>
    <name type="scientific">Salmonella arizonae (strain ATCC BAA-731 / CDC346-86 / RSK2980)</name>
    <dbReference type="NCBI Taxonomy" id="41514"/>
    <lineage>
        <taxon>Bacteria</taxon>
        <taxon>Pseudomonadati</taxon>
        <taxon>Pseudomonadota</taxon>
        <taxon>Gammaproteobacteria</taxon>
        <taxon>Enterobacterales</taxon>
        <taxon>Enterobacteriaceae</taxon>
        <taxon>Salmonella</taxon>
    </lineage>
</organism>